<dbReference type="EMBL" id="AE002098">
    <property type="protein sequence ID" value="AAF40982.1"/>
    <property type="molecule type" value="Genomic_DNA"/>
</dbReference>
<dbReference type="PIR" id="H81185">
    <property type="entry name" value="H81185"/>
</dbReference>
<dbReference type="RefSeq" id="NP_273598.1">
    <property type="nucleotide sequence ID" value="NC_003112.2"/>
</dbReference>
<dbReference type="RefSeq" id="WP_002225573.1">
    <property type="nucleotide sequence ID" value="NC_003112.2"/>
</dbReference>
<dbReference type="SMR" id="Q9K0N4"/>
<dbReference type="FunCoup" id="Q9K0N4">
    <property type="interactions" value="610"/>
</dbReference>
<dbReference type="STRING" id="122586.NMB0554"/>
<dbReference type="PaxDb" id="122586-NMB0554"/>
<dbReference type="KEGG" id="nme:NMB0554"/>
<dbReference type="PATRIC" id="fig|122586.8.peg.709"/>
<dbReference type="HOGENOM" id="CLU_005965_2_1_4"/>
<dbReference type="InParanoid" id="Q9K0N4"/>
<dbReference type="OrthoDB" id="9766019at2"/>
<dbReference type="Proteomes" id="UP000000425">
    <property type="component" value="Chromosome"/>
</dbReference>
<dbReference type="GO" id="GO:0005829">
    <property type="term" value="C:cytosol"/>
    <property type="evidence" value="ECO:0000318"/>
    <property type="project" value="GO_Central"/>
</dbReference>
<dbReference type="GO" id="GO:0031240">
    <property type="term" value="C:external side of cell outer membrane"/>
    <property type="evidence" value="ECO:0000314"/>
    <property type="project" value="CAFA"/>
</dbReference>
<dbReference type="GO" id="GO:0005524">
    <property type="term" value="F:ATP binding"/>
    <property type="evidence" value="ECO:0007669"/>
    <property type="project" value="UniProtKB-UniRule"/>
</dbReference>
<dbReference type="GO" id="GO:0016887">
    <property type="term" value="F:ATP hydrolysis activity"/>
    <property type="evidence" value="ECO:0000318"/>
    <property type="project" value="GO_Central"/>
</dbReference>
<dbReference type="GO" id="GO:0140662">
    <property type="term" value="F:ATP-dependent protein folding chaperone"/>
    <property type="evidence" value="ECO:0007669"/>
    <property type="project" value="InterPro"/>
</dbReference>
<dbReference type="GO" id="GO:0031072">
    <property type="term" value="F:heat shock protein binding"/>
    <property type="evidence" value="ECO:0000318"/>
    <property type="project" value="GO_Central"/>
</dbReference>
<dbReference type="GO" id="GO:0002020">
    <property type="term" value="F:protease binding"/>
    <property type="evidence" value="ECO:0000353"/>
    <property type="project" value="CAFA"/>
</dbReference>
<dbReference type="GO" id="GO:0044183">
    <property type="term" value="F:protein folding chaperone"/>
    <property type="evidence" value="ECO:0000318"/>
    <property type="project" value="GO_Central"/>
</dbReference>
<dbReference type="GO" id="GO:0051082">
    <property type="term" value="F:unfolded protein binding"/>
    <property type="evidence" value="ECO:0007669"/>
    <property type="project" value="InterPro"/>
</dbReference>
<dbReference type="GO" id="GO:0051085">
    <property type="term" value="P:chaperone cofactor-dependent protein refolding"/>
    <property type="evidence" value="ECO:0000318"/>
    <property type="project" value="GO_Central"/>
</dbReference>
<dbReference type="GO" id="GO:0042026">
    <property type="term" value="P:protein refolding"/>
    <property type="evidence" value="ECO:0000318"/>
    <property type="project" value="GO_Central"/>
</dbReference>
<dbReference type="CDD" id="cd10234">
    <property type="entry name" value="ASKHA_NBD_HSP70_DnaK-like"/>
    <property type="match status" value="1"/>
</dbReference>
<dbReference type="FunFam" id="1.20.1270.10:FF:000034">
    <property type="entry name" value="Chaperone protein DnaK"/>
    <property type="match status" value="1"/>
</dbReference>
<dbReference type="FunFam" id="2.60.34.10:FF:000014">
    <property type="entry name" value="Chaperone protein DnaK HSP70"/>
    <property type="match status" value="1"/>
</dbReference>
<dbReference type="FunFam" id="3.30.420.40:FF:000004">
    <property type="entry name" value="Molecular chaperone DnaK"/>
    <property type="match status" value="1"/>
</dbReference>
<dbReference type="FunFam" id="3.90.640.10:FF:000003">
    <property type="entry name" value="Molecular chaperone DnaK"/>
    <property type="match status" value="1"/>
</dbReference>
<dbReference type="Gene3D" id="1.20.1270.10">
    <property type="match status" value="1"/>
</dbReference>
<dbReference type="Gene3D" id="3.30.420.40">
    <property type="match status" value="2"/>
</dbReference>
<dbReference type="Gene3D" id="3.90.640.10">
    <property type="entry name" value="Actin, Chain A, domain 4"/>
    <property type="match status" value="1"/>
</dbReference>
<dbReference type="Gene3D" id="2.60.34.10">
    <property type="entry name" value="Substrate Binding Domain Of DNAk, Chain A, domain 1"/>
    <property type="match status" value="1"/>
</dbReference>
<dbReference type="HAMAP" id="MF_00332">
    <property type="entry name" value="DnaK"/>
    <property type="match status" value="1"/>
</dbReference>
<dbReference type="InterPro" id="IPR043129">
    <property type="entry name" value="ATPase_NBD"/>
</dbReference>
<dbReference type="InterPro" id="IPR012725">
    <property type="entry name" value="Chaperone_DnaK"/>
</dbReference>
<dbReference type="InterPro" id="IPR018181">
    <property type="entry name" value="Heat_shock_70_CS"/>
</dbReference>
<dbReference type="InterPro" id="IPR029048">
    <property type="entry name" value="HSP70_C_sf"/>
</dbReference>
<dbReference type="InterPro" id="IPR029047">
    <property type="entry name" value="HSP70_peptide-bd_sf"/>
</dbReference>
<dbReference type="InterPro" id="IPR013126">
    <property type="entry name" value="Hsp_70_fam"/>
</dbReference>
<dbReference type="NCBIfam" id="NF001413">
    <property type="entry name" value="PRK00290.1"/>
    <property type="match status" value="1"/>
</dbReference>
<dbReference type="NCBIfam" id="NF003520">
    <property type="entry name" value="PRK05183.1"/>
    <property type="match status" value="1"/>
</dbReference>
<dbReference type="NCBIfam" id="TIGR02350">
    <property type="entry name" value="prok_dnaK"/>
    <property type="match status" value="1"/>
</dbReference>
<dbReference type="PANTHER" id="PTHR19375">
    <property type="entry name" value="HEAT SHOCK PROTEIN 70KDA"/>
    <property type="match status" value="1"/>
</dbReference>
<dbReference type="Pfam" id="PF00012">
    <property type="entry name" value="HSP70"/>
    <property type="match status" value="1"/>
</dbReference>
<dbReference type="PRINTS" id="PR00301">
    <property type="entry name" value="HEATSHOCK70"/>
</dbReference>
<dbReference type="SUPFAM" id="SSF53067">
    <property type="entry name" value="Actin-like ATPase domain"/>
    <property type="match status" value="2"/>
</dbReference>
<dbReference type="SUPFAM" id="SSF100934">
    <property type="entry name" value="Heat shock protein 70kD (HSP70), C-terminal subdomain"/>
    <property type="match status" value="1"/>
</dbReference>
<dbReference type="SUPFAM" id="SSF100920">
    <property type="entry name" value="Heat shock protein 70kD (HSP70), peptide-binding domain"/>
    <property type="match status" value="1"/>
</dbReference>
<dbReference type="PROSITE" id="PS00297">
    <property type="entry name" value="HSP70_1"/>
    <property type="match status" value="1"/>
</dbReference>
<dbReference type="PROSITE" id="PS00329">
    <property type="entry name" value="HSP70_2"/>
    <property type="match status" value="1"/>
</dbReference>
<dbReference type="PROSITE" id="PS01036">
    <property type="entry name" value="HSP70_3"/>
    <property type="match status" value="1"/>
</dbReference>
<proteinExistence type="evidence at protein level"/>
<reference key="1">
    <citation type="journal article" date="2000" name="Science">
        <title>Complete genome sequence of Neisseria meningitidis serogroup B strain MC58.</title>
        <authorList>
            <person name="Tettelin H."/>
            <person name="Saunders N.J."/>
            <person name="Heidelberg J.F."/>
            <person name="Jeffries A.C."/>
            <person name="Nelson K.E."/>
            <person name="Eisen J.A."/>
            <person name="Ketchum K.A."/>
            <person name="Hood D.W."/>
            <person name="Peden J.F."/>
            <person name="Dodson R.J."/>
            <person name="Nelson W.C."/>
            <person name="Gwinn M.L."/>
            <person name="DeBoy R.T."/>
            <person name="Peterson J.D."/>
            <person name="Hickey E.K."/>
            <person name="Haft D.H."/>
            <person name="Salzberg S.L."/>
            <person name="White O."/>
            <person name="Fleischmann R.D."/>
            <person name="Dougherty B.A."/>
            <person name="Mason T.M."/>
            <person name="Ciecko A."/>
            <person name="Parksey D.S."/>
            <person name="Blair E."/>
            <person name="Cittone H."/>
            <person name="Clark E.B."/>
            <person name="Cotton M.D."/>
            <person name="Utterback T.R."/>
            <person name="Khouri H.M."/>
            <person name="Qin H."/>
            <person name="Vamathevan J.J."/>
            <person name="Gill J."/>
            <person name="Scarlato V."/>
            <person name="Masignani V."/>
            <person name="Pizza M."/>
            <person name="Grandi G."/>
            <person name="Sun L."/>
            <person name="Smith H.O."/>
            <person name="Fraser C.M."/>
            <person name="Moxon E.R."/>
            <person name="Rappuoli R."/>
            <person name="Venter J.C."/>
        </authorList>
    </citation>
    <scope>NUCLEOTIDE SEQUENCE [LARGE SCALE GENOMIC DNA]</scope>
    <source>
        <strain>ATCC BAA-335 / MC58</strain>
    </source>
</reference>
<reference key="2">
    <citation type="journal article" date="2006" name="Proteomics">
        <title>Proteomic analysis of a meningococcal outer membrane vesicle vaccine prepared from the group B strain NZ98/254.</title>
        <authorList>
            <person name="Vipond C."/>
            <person name="Suker J."/>
            <person name="Jones C."/>
            <person name="Tang C."/>
            <person name="Feavers I.M."/>
            <person name="Wheeler J.X."/>
        </authorList>
    </citation>
    <scope>IDENTIFICATION BY MASS SPECTROMETRY [LARGE SCALE ANALYSIS]</scope>
    <source>
        <strain>NZ98/254 / Serogroup B</strain>
    </source>
</reference>
<keyword id="KW-0067">ATP-binding</keyword>
<keyword id="KW-0143">Chaperone</keyword>
<keyword id="KW-0547">Nucleotide-binding</keyword>
<keyword id="KW-0597">Phosphoprotein</keyword>
<keyword id="KW-1185">Reference proteome</keyword>
<keyword id="KW-0346">Stress response</keyword>
<evidence type="ECO:0000250" key="1"/>
<evidence type="ECO:0000256" key="2">
    <source>
        <dbReference type="SAM" id="MobiDB-lite"/>
    </source>
</evidence>
<evidence type="ECO:0000305" key="3"/>
<protein>
    <recommendedName>
        <fullName>Chaperone protein DnaK</fullName>
    </recommendedName>
    <alternativeName>
        <fullName>HSP70</fullName>
    </alternativeName>
    <alternativeName>
        <fullName>Heat shock 70 kDa protein</fullName>
    </alternativeName>
    <alternativeName>
        <fullName>Heat shock protein 70</fullName>
    </alternativeName>
</protein>
<gene>
    <name type="primary">dnaK</name>
    <name type="ordered locus">NMB0554</name>
</gene>
<accession>Q9K0N4</accession>
<feature type="chain" id="PRO_0000078503" description="Chaperone protein DnaK">
    <location>
        <begin position="1"/>
        <end position="642"/>
    </location>
</feature>
<feature type="region of interest" description="Disordered" evidence="2">
    <location>
        <begin position="608"/>
        <end position="642"/>
    </location>
</feature>
<feature type="compositionally biased region" description="Low complexity" evidence="2">
    <location>
        <begin position="608"/>
        <end position="622"/>
    </location>
</feature>
<feature type="compositionally biased region" description="Acidic residues" evidence="2">
    <location>
        <begin position="628"/>
        <end position="642"/>
    </location>
</feature>
<feature type="modified residue" description="Phosphothreonine; by autocatalysis" evidence="1">
    <location>
        <position position="200"/>
    </location>
</feature>
<sequence>MAKVIGIDLGTTNSCLAISENGQTKVIENAEGARTTPSVIAYLDGGEILVGAPAKRQAVTNAKNTIYAAKRLIGHKFEDKEVQRDIESMPFEIIKANNGDAWVKAQGKELSPPQISAEVLRKMKEAAEAYLGEKVTEAVITVPAYFNDSQRQATKDAGRIAGLDVKRIINEPTAAALAFGMDKGDNKDRKVAVYDLGGGTFDISIIEIANLDGDKQFEVLATNGDTFLGGEDFDQRLIDHIIAEFKKEQGIDLKQDVMALQRLKEAAEKAKIELSSGQQTEINLPYITMDATGPKHLAMKITRAKFESLVEDLITRSIEPCKIALKDAGLSTGDIDDVILVGGQSRMPKVQEAVKAFFGKEPRKDVNPDEAVAVGAAIQGEVLSGGRSDVLLLDVTPLSLGIETMGGVMTKLIQKNTTIPTKASQVFSTAEDNQSAVTIHVLQGERERASANKSLGQFNLGDIAPAPRGMPQIEVTFDIDANGILHVSAKDKGTGKAANITIQGSSGLSEEEIERMVKDAEANAEEDKKLTELVASRNQAEALIHSVKKSLADYGDKLDAAEKEKIEAALKEAEEAVKGDDKAAIDAKTEALGAASQKLGEMVYAQAQAEAQAGESEQANASAKKDDDVVDADFEEVKDDKK</sequence>
<comment type="function">
    <text evidence="1">Acts as a chaperone.</text>
</comment>
<comment type="induction">
    <text evidence="1">By stress conditions e.g. heat shock (By similarity).</text>
</comment>
<comment type="miscellaneous">
    <text>Present in outer membrane vesicle formulations which are used as vaccines in human.</text>
</comment>
<comment type="similarity">
    <text evidence="3">Belongs to the heat shock protein 70 family.</text>
</comment>
<name>DNAK_NEIMB</name>
<organism>
    <name type="scientific">Neisseria meningitidis serogroup B (strain ATCC BAA-335 / MC58)</name>
    <dbReference type="NCBI Taxonomy" id="122586"/>
    <lineage>
        <taxon>Bacteria</taxon>
        <taxon>Pseudomonadati</taxon>
        <taxon>Pseudomonadota</taxon>
        <taxon>Betaproteobacteria</taxon>
        <taxon>Neisseriales</taxon>
        <taxon>Neisseriaceae</taxon>
        <taxon>Neisseria</taxon>
    </lineage>
</organism>